<feature type="chain" id="PRO_1000212886" description="UPF0306 protein YhbP">
    <location>
        <begin position="1"/>
        <end position="147"/>
    </location>
</feature>
<protein>
    <recommendedName>
        <fullName evidence="1">UPF0306 protein YhbP</fullName>
    </recommendedName>
</protein>
<proteinExistence type="inferred from homology"/>
<sequence length="147" mass="16776">METLIAISRWLAKQHVVTWCVQQEGELWCANAFYLFDAQKVAFYILTEEKTRHAQMSGPQAAVAGTVNGQPKTVALIRGVQFKGEIRRLEGEESDLARKAYNRRFPVARMLSAPVWEIRLDEIKFTDNTLGFGKKMIWLRDSGTEQA</sequence>
<gene>
    <name evidence="1" type="primary">yhbP</name>
    <name type="ordered locus">BWG_2858</name>
</gene>
<comment type="similarity">
    <text evidence="1">Belongs to the UPF0306 family.</text>
</comment>
<evidence type="ECO:0000255" key="1">
    <source>
        <dbReference type="HAMAP-Rule" id="MF_00764"/>
    </source>
</evidence>
<name>YHBP_ECOBW</name>
<accession>C4ZSP5</accession>
<dbReference type="EMBL" id="CP001396">
    <property type="protein sequence ID" value="ACR62379.1"/>
    <property type="molecule type" value="Genomic_DNA"/>
</dbReference>
<dbReference type="RefSeq" id="WP_000449030.1">
    <property type="nucleotide sequence ID" value="NC_012759.1"/>
</dbReference>
<dbReference type="SMR" id="C4ZSP5"/>
<dbReference type="KEGG" id="ebw:BWG_2858"/>
<dbReference type="HOGENOM" id="CLU_105087_3_0_6"/>
<dbReference type="FunFam" id="2.30.110.10:FF:000003">
    <property type="entry name" value="UPF0306 protein YhbP"/>
    <property type="match status" value="1"/>
</dbReference>
<dbReference type="Gene3D" id="2.30.110.10">
    <property type="entry name" value="Electron Transport, Fmn-binding Protein, Chain A"/>
    <property type="match status" value="1"/>
</dbReference>
<dbReference type="HAMAP" id="MF_00764">
    <property type="entry name" value="UPF0306"/>
    <property type="match status" value="1"/>
</dbReference>
<dbReference type="InterPro" id="IPR012349">
    <property type="entry name" value="Split_barrel_FMN-bd"/>
</dbReference>
<dbReference type="InterPro" id="IPR011194">
    <property type="entry name" value="UPF0306"/>
</dbReference>
<dbReference type="NCBIfam" id="NF002900">
    <property type="entry name" value="PRK03467.1"/>
    <property type="match status" value="1"/>
</dbReference>
<dbReference type="PIRSF" id="PIRSF009554">
    <property type="entry name" value="UCP009554"/>
    <property type="match status" value="1"/>
</dbReference>
<dbReference type="SUPFAM" id="SSF50475">
    <property type="entry name" value="FMN-binding split barrel"/>
    <property type="match status" value="1"/>
</dbReference>
<organism>
    <name type="scientific">Escherichia coli (strain K12 / MC4100 / BW2952)</name>
    <dbReference type="NCBI Taxonomy" id="595496"/>
    <lineage>
        <taxon>Bacteria</taxon>
        <taxon>Pseudomonadati</taxon>
        <taxon>Pseudomonadota</taxon>
        <taxon>Gammaproteobacteria</taxon>
        <taxon>Enterobacterales</taxon>
        <taxon>Enterobacteriaceae</taxon>
        <taxon>Escherichia</taxon>
    </lineage>
</organism>
<reference key="1">
    <citation type="journal article" date="2009" name="J. Bacteriol.">
        <title>Genomic sequencing reveals regulatory mutations and recombinational events in the widely used MC4100 lineage of Escherichia coli K-12.</title>
        <authorList>
            <person name="Ferenci T."/>
            <person name="Zhou Z."/>
            <person name="Betteridge T."/>
            <person name="Ren Y."/>
            <person name="Liu Y."/>
            <person name="Feng L."/>
            <person name="Reeves P.R."/>
            <person name="Wang L."/>
        </authorList>
    </citation>
    <scope>NUCLEOTIDE SEQUENCE [LARGE SCALE GENOMIC DNA]</scope>
    <source>
        <strain>K12 / MC4100 / BW2952</strain>
    </source>
</reference>